<feature type="chain" id="PRO_0000054896" description="Enoyl-[acyl-carrier-protein] reductase [NADH] FabI">
    <location>
        <begin position="1"/>
        <end position="260"/>
    </location>
</feature>
<feature type="active site" description="Proton acceptor" evidence="1">
    <location>
        <position position="146"/>
    </location>
</feature>
<feature type="active site" description="Proton acceptor" evidence="1">
    <location>
        <position position="156"/>
    </location>
</feature>
<feature type="binding site" evidence="1">
    <location>
        <position position="13"/>
    </location>
    <ligand>
        <name>NAD(+)</name>
        <dbReference type="ChEBI" id="CHEBI:57540"/>
    </ligand>
</feature>
<feature type="binding site" evidence="1">
    <location>
        <begin position="19"/>
        <end position="20"/>
    </location>
    <ligand>
        <name>NAD(+)</name>
        <dbReference type="ChEBI" id="CHEBI:57540"/>
    </ligand>
</feature>
<feature type="binding site" evidence="1">
    <location>
        <position position="40"/>
    </location>
    <ligand>
        <name>NAD(+)</name>
        <dbReference type="ChEBI" id="CHEBI:57540"/>
    </ligand>
</feature>
<feature type="binding site" evidence="1">
    <location>
        <begin position="64"/>
        <end position="65"/>
    </location>
    <ligand>
        <name>NAD(+)</name>
        <dbReference type="ChEBI" id="CHEBI:57540"/>
    </ligand>
</feature>
<feature type="binding site" evidence="1">
    <location>
        <position position="92"/>
    </location>
    <ligand>
        <name>NAD(+)</name>
        <dbReference type="ChEBI" id="CHEBI:57540"/>
    </ligand>
</feature>
<feature type="binding site" evidence="1">
    <location>
        <position position="163"/>
    </location>
    <ligand>
        <name>NAD(+)</name>
        <dbReference type="ChEBI" id="CHEBI:57540"/>
    </ligand>
</feature>
<feature type="binding site" evidence="1">
    <location>
        <begin position="192"/>
        <end position="196"/>
    </location>
    <ligand>
        <name>NAD(+)</name>
        <dbReference type="ChEBI" id="CHEBI:57540"/>
    </ligand>
</feature>
<feature type="site" description="Involved in acyl-ACP binding" evidence="1">
    <location>
        <position position="204"/>
    </location>
</feature>
<feature type="site" description="Involved in acyl-ACP binding" evidence="1">
    <location>
        <position position="205"/>
    </location>
</feature>
<gene>
    <name type="primary">fabI</name>
    <name type="ordered locus">BU265</name>
</gene>
<dbReference type="EC" id="1.3.1.9"/>
<dbReference type="EMBL" id="BA000003">
    <property type="protein sequence ID" value="BAB12975.1"/>
    <property type="molecule type" value="Genomic_DNA"/>
</dbReference>
<dbReference type="RefSeq" id="NP_240089.1">
    <property type="nucleotide sequence ID" value="NC_002528.1"/>
</dbReference>
<dbReference type="RefSeq" id="WP_010896033.1">
    <property type="nucleotide sequence ID" value="NZ_AP036055.1"/>
</dbReference>
<dbReference type="SMR" id="P57353"/>
<dbReference type="STRING" id="563178.BUAP5A_260"/>
<dbReference type="EnsemblBacteria" id="BAB12975">
    <property type="protein sequence ID" value="BAB12975"/>
    <property type="gene ID" value="BAB12975"/>
</dbReference>
<dbReference type="KEGG" id="buc:BU265"/>
<dbReference type="PATRIC" id="fig|107806.10.peg.275"/>
<dbReference type="eggNOG" id="COG0623">
    <property type="taxonomic scope" value="Bacteria"/>
</dbReference>
<dbReference type="HOGENOM" id="CLU_010194_10_1_6"/>
<dbReference type="UniPathway" id="UPA00078"/>
<dbReference type="UniPathway" id="UPA00094"/>
<dbReference type="Proteomes" id="UP000001806">
    <property type="component" value="Chromosome"/>
</dbReference>
<dbReference type="GO" id="GO:0004318">
    <property type="term" value="F:enoyl-[acyl-carrier-protein] reductase (NADH) activity"/>
    <property type="evidence" value="ECO:0000250"/>
    <property type="project" value="UniProtKB"/>
</dbReference>
<dbReference type="GO" id="GO:0042802">
    <property type="term" value="F:identical protein binding"/>
    <property type="evidence" value="ECO:0000250"/>
    <property type="project" value="UniProtKB"/>
</dbReference>
<dbReference type="GO" id="GO:0009102">
    <property type="term" value="P:biotin biosynthetic process"/>
    <property type="evidence" value="ECO:0000250"/>
    <property type="project" value="UniProtKB"/>
</dbReference>
<dbReference type="GO" id="GO:0030497">
    <property type="term" value="P:fatty acid elongation"/>
    <property type="evidence" value="ECO:0000250"/>
    <property type="project" value="UniProtKB"/>
</dbReference>
<dbReference type="CDD" id="cd05372">
    <property type="entry name" value="ENR_SDR"/>
    <property type="match status" value="1"/>
</dbReference>
<dbReference type="FunFam" id="1.10.8.400:FF:000001">
    <property type="entry name" value="Enoyl-[acyl-carrier-protein] reductase [NADH]"/>
    <property type="match status" value="1"/>
</dbReference>
<dbReference type="FunFam" id="3.40.50.720:FF:000054">
    <property type="entry name" value="Enoyl-[acyl-carrier-protein] reductase [NADH]"/>
    <property type="match status" value="1"/>
</dbReference>
<dbReference type="Gene3D" id="1.10.8.400">
    <property type="entry name" value="Enoyl acyl carrier protein reductase"/>
    <property type="match status" value="1"/>
</dbReference>
<dbReference type="Gene3D" id="3.40.50.720">
    <property type="entry name" value="NAD(P)-binding Rossmann-like Domain"/>
    <property type="match status" value="1"/>
</dbReference>
<dbReference type="InterPro" id="IPR014358">
    <property type="entry name" value="Enoyl-ACP_Rdtase_NADH"/>
</dbReference>
<dbReference type="InterPro" id="IPR036291">
    <property type="entry name" value="NAD(P)-bd_dom_sf"/>
</dbReference>
<dbReference type="InterPro" id="IPR002347">
    <property type="entry name" value="SDR_fam"/>
</dbReference>
<dbReference type="PANTHER" id="PTHR43159">
    <property type="entry name" value="ENOYL-[ACYL-CARRIER-PROTEIN] REDUCTASE"/>
    <property type="match status" value="1"/>
</dbReference>
<dbReference type="PANTHER" id="PTHR43159:SF2">
    <property type="entry name" value="ENOYL-[ACYL-CARRIER-PROTEIN] REDUCTASE [NADH], CHLOROPLASTIC"/>
    <property type="match status" value="1"/>
</dbReference>
<dbReference type="Pfam" id="PF13561">
    <property type="entry name" value="adh_short_C2"/>
    <property type="match status" value="1"/>
</dbReference>
<dbReference type="PIRSF" id="PIRSF000094">
    <property type="entry name" value="Enoyl-ACP_rdct"/>
    <property type="match status" value="1"/>
</dbReference>
<dbReference type="SUPFAM" id="SSF51735">
    <property type="entry name" value="NAD(P)-binding Rossmann-fold domains"/>
    <property type="match status" value="1"/>
</dbReference>
<name>FABI_BUCAI</name>
<evidence type="ECO:0000250" key="1"/>
<evidence type="ECO:0000305" key="2"/>
<keyword id="KW-0093">Biotin biosynthesis</keyword>
<keyword id="KW-0275">Fatty acid biosynthesis</keyword>
<keyword id="KW-0276">Fatty acid metabolism</keyword>
<keyword id="KW-0444">Lipid biosynthesis</keyword>
<keyword id="KW-0443">Lipid metabolism</keyword>
<keyword id="KW-0520">NAD</keyword>
<keyword id="KW-0560">Oxidoreductase</keyword>
<keyword id="KW-1185">Reference proteome</keyword>
<proteinExistence type="inferred from homology"/>
<organism>
    <name type="scientific">Buchnera aphidicola subsp. Acyrthosiphon pisum (strain APS)</name>
    <name type="common">Acyrthosiphon pisum symbiotic bacterium</name>
    <dbReference type="NCBI Taxonomy" id="107806"/>
    <lineage>
        <taxon>Bacteria</taxon>
        <taxon>Pseudomonadati</taxon>
        <taxon>Pseudomonadota</taxon>
        <taxon>Gammaproteobacteria</taxon>
        <taxon>Enterobacterales</taxon>
        <taxon>Erwiniaceae</taxon>
        <taxon>Buchnera</taxon>
    </lineage>
</organism>
<accession>P57353</accession>
<comment type="function">
    <text evidence="1">Catalyzes the reduction of a carbon-carbon double bond in an enoyl moiety that is covalently linked to an acyl carrier protein (ACP). Involved in the elongation cycle of fatty acid which are used in the lipid metabolism and in the biotin biosynthesis (By similarity).</text>
</comment>
<comment type="catalytic activity">
    <reaction>
        <text>a 2,3-saturated acyl-[ACP] + NAD(+) = a (2E)-enoyl-[ACP] + NADH + H(+)</text>
        <dbReference type="Rhea" id="RHEA:10240"/>
        <dbReference type="Rhea" id="RHEA-COMP:9925"/>
        <dbReference type="Rhea" id="RHEA-COMP:9926"/>
        <dbReference type="ChEBI" id="CHEBI:15378"/>
        <dbReference type="ChEBI" id="CHEBI:57540"/>
        <dbReference type="ChEBI" id="CHEBI:57945"/>
        <dbReference type="ChEBI" id="CHEBI:78784"/>
        <dbReference type="ChEBI" id="CHEBI:78785"/>
        <dbReference type="EC" id="1.3.1.9"/>
    </reaction>
</comment>
<comment type="pathway">
    <text>Lipid metabolism; fatty acid biosynthesis.</text>
</comment>
<comment type="pathway">
    <text>Cofactor biosynthesis; biotin biosynthesis.</text>
</comment>
<comment type="subunit">
    <text evidence="1">Homotetramer.</text>
</comment>
<comment type="similarity">
    <text evidence="2">Belongs to the short-chain dehydrogenases/reductases (SDR) family. FabI subfamily.</text>
</comment>
<sequence>MGFLKGKKFLIIGISSVRSIAFGIAKSLYNQKAELGFVCQNEKIRKKIKKLVEPMKSCIVLCCDVSNDKNIKKLFIDLGQVWKKFDGLVHAIAYCPKQYFNGDFIDNITREGFNISHEISSYSFIGLVKACRTMLNNFSSLLTLSYLGSQRVVPNYNVMGLAKASLEASVRYMASSLGKENIRVNAISSSPIKTISSYKITNFNKIRNCSYASSFLKNSVTSENIGNVASFLLSDLSLGITGSVIYVDNGFNVSSMNNIQ</sequence>
<protein>
    <recommendedName>
        <fullName>Enoyl-[acyl-carrier-protein] reductase [NADH] FabI</fullName>
        <shortName>ENR</shortName>
        <ecNumber>1.3.1.9</ecNumber>
    </recommendedName>
    <alternativeName>
        <fullName>NADH-dependent enoyl-ACP reductase</fullName>
    </alternativeName>
</protein>
<reference key="1">
    <citation type="journal article" date="2000" name="Nature">
        <title>Genome sequence of the endocellular bacterial symbiont of aphids Buchnera sp. APS.</title>
        <authorList>
            <person name="Shigenobu S."/>
            <person name="Watanabe H."/>
            <person name="Hattori M."/>
            <person name="Sakaki Y."/>
            <person name="Ishikawa H."/>
        </authorList>
    </citation>
    <scope>NUCLEOTIDE SEQUENCE [LARGE SCALE GENOMIC DNA]</scope>
    <source>
        <strain>APS</strain>
    </source>
</reference>